<name>RPO10_PYRAE</name>
<sequence>MIIPIRCFTCGKPLGHLYAVFKRRVLAGEHPGRVLDDLGVTRYCCRRTLMAHVEWIDDVLLYERRS</sequence>
<keyword id="KW-0963">Cytoplasm</keyword>
<keyword id="KW-0240">DNA-directed RNA polymerase</keyword>
<keyword id="KW-0479">Metal-binding</keyword>
<keyword id="KW-0548">Nucleotidyltransferase</keyword>
<keyword id="KW-1185">Reference proteome</keyword>
<keyword id="KW-0804">Transcription</keyword>
<keyword id="KW-0808">Transferase</keyword>
<keyword id="KW-0862">Zinc</keyword>
<gene>
    <name evidence="1" type="primary">rpo10</name>
    <name evidence="1" type="synonym">rpoN</name>
    <name type="ordered locus">PAE0675</name>
    <name type="ordered locus">PAE0675a</name>
</gene>
<organism>
    <name type="scientific">Pyrobaculum aerophilum (strain ATCC 51768 / DSM 7523 / JCM 9630 / CIP 104966 / NBRC 100827 / IM2)</name>
    <dbReference type="NCBI Taxonomy" id="178306"/>
    <lineage>
        <taxon>Archaea</taxon>
        <taxon>Thermoproteota</taxon>
        <taxon>Thermoprotei</taxon>
        <taxon>Thermoproteales</taxon>
        <taxon>Thermoproteaceae</taxon>
        <taxon>Pyrobaculum</taxon>
    </lineage>
</organism>
<evidence type="ECO:0000255" key="1">
    <source>
        <dbReference type="HAMAP-Rule" id="MF_00250"/>
    </source>
</evidence>
<feature type="chain" id="PRO_0000121357" description="DNA-directed RNA polymerase subunit Rpo10">
    <location>
        <begin position="1"/>
        <end position="66"/>
    </location>
</feature>
<feature type="binding site" evidence="1">
    <location>
        <position position="7"/>
    </location>
    <ligand>
        <name>Zn(2+)</name>
        <dbReference type="ChEBI" id="CHEBI:29105"/>
    </ligand>
</feature>
<feature type="binding site" evidence="1">
    <location>
        <position position="10"/>
    </location>
    <ligand>
        <name>Zn(2+)</name>
        <dbReference type="ChEBI" id="CHEBI:29105"/>
    </ligand>
</feature>
<feature type="binding site" evidence="1">
    <location>
        <position position="44"/>
    </location>
    <ligand>
        <name>Zn(2+)</name>
        <dbReference type="ChEBI" id="CHEBI:29105"/>
    </ligand>
</feature>
<feature type="binding site" evidence="1">
    <location>
        <position position="45"/>
    </location>
    <ligand>
        <name>Zn(2+)</name>
        <dbReference type="ChEBI" id="CHEBI:29105"/>
    </ligand>
</feature>
<comment type="function">
    <text evidence="1">DNA-dependent RNA polymerase (RNAP) catalyzes the transcription of DNA into RNA using the four ribonucleoside triphosphates as substrates.</text>
</comment>
<comment type="catalytic activity">
    <reaction evidence="1">
        <text>RNA(n) + a ribonucleoside 5'-triphosphate = RNA(n+1) + diphosphate</text>
        <dbReference type="Rhea" id="RHEA:21248"/>
        <dbReference type="Rhea" id="RHEA-COMP:14527"/>
        <dbReference type="Rhea" id="RHEA-COMP:17342"/>
        <dbReference type="ChEBI" id="CHEBI:33019"/>
        <dbReference type="ChEBI" id="CHEBI:61557"/>
        <dbReference type="ChEBI" id="CHEBI:140395"/>
        <dbReference type="EC" id="2.7.7.6"/>
    </reaction>
</comment>
<comment type="cofactor">
    <cofactor evidence="1">
        <name>Zn(2+)</name>
        <dbReference type="ChEBI" id="CHEBI:29105"/>
    </cofactor>
    <text evidence="1">Binds 1 zinc ion.</text>
</comment>
<comment type="subunit">
    <text evidence="1">Part of the RNA polymerase complex.</text>
</comment>
<comment type="subcellular location">
    <subcellularLocation>
        <location evidence="1">Cytoplasm</location>
    </subcellularLocation>
</comment>
<comment type="similarity">
    <text evidence="1">Belongs to the archaeal Rpo10/eukaryotic RPB10 RNA polymerase subunit family.</text>
</comment>
<dbReference type="EC" id="2.7.7.6" evidence="1"/>
<dbReference type="EMBL" id="AE009441">
    <property type="protein sequence ID" value="AAL62944.1"/>
    <property type="molecule type" value="Genomic_DNA"/>
</dbReference>
<dbReference type="RefSeq" id="WP_011007416.1">
    <property type="nucleotide sequence ID" value="NC_003364.1"/>
</dbReference>
<dbReference type="SMR" id="Q8ZYP9"/>
<dbReference type="FunCoup" id="Q8ZYP9">
    <property type="interactions" value="90"/>
</dbReference>
<dbReference type="STRING" id="178306.PAE0675a"/>
<dbReference type="EnsemblBacteria" id="AAL62944">
    <property type="protein sequence ID" value="AAL62944"/>
    <property type="gene ID" value="PAE0675a"/>
</dbReference>
<dbReference type="GeneID" id="1465169"/>
<dbReference type="KEGG" id="pai:PAE0675a"/>
<dbReference type="PATRIC" id="fig|178306.9.peg.489"/>
<dbReference type="eggNOG" id="arCOG04244">
    <property type="taxonomic scope" value="Archaea"/>
</dbReference>
<dbReference type="HOGENOM" id="CLU_143122_1_1_2"/>
<dbReference type="InParanoid" id="Q8ZYP9"/>
<dbReference type="Proteomes" id="UP000002439">
    <property type="component" value="Chromosome"/>
</dbReference>
<dbReference type="GO" id="GO:0005737">
    <property type="term" value="C:cytoplasm"/>
    <property type="evidence" value="ECO:0007669"/>
    <property type="project" value="UniProtKB-SubCell"/>
</dbReference>
<dbReference type="GO" id="GO:0000428">
    <property type="term" value="C:DNA-directed RNA polymerase complex"/>
    <property type="evidence" value="ECO:0007669"/>
    <property type="project" value="UniProtKB-KW"/>
</dbReference>
<dbReference type="GO" id="GO:0003677">
    <property type="term" value="F:DNA binding"/>
    <property type="evidence" value="ECO:0007669"/>
    <property type="project" value="InterPro"/>
</dbReference>
<dbReference type="GO" id="GO:0003899">
    <property type="term" value="F:DNA-directed RNA polymerase activity"/>
    <property type="evidence" value="ECO:0007669"/>
    <property type="project" value="UniProtKB-UniRule"/>
</dbReference>
<dbReference type="GO" id="GO:0008270">
    <property type="term" value="F:zinc ion binding"/>
    <property type="evidence" value="ECO:0000318"/>
    <property type="project" value="GO_Central"/>
</dbReference>
<dbReference type="GO" id="GO:0006351">
    <property type="term" value="P:DNA-templated transcription"/>
    <property type="evidence" value="ECO:0007669"/>
    <property type="project" value="UniProtKB-UniRule"/>
</dbReference>
<dbReference type="FunFam" id="1.10.10.60:FF:000024">
    <property type="entry name" value="DNA-directed RNA polymerases I, II, and III subunit"/>
    <property type="match status" value="1"/>
</dbReference>
<dbReference type="Gene3D" id="1.10.10.60">
    <property type="entry name" value="Homeodomain-like"/>
    <property type="match status" value="1"/>
</dbReference>
<dbReference type="HAMAP" id="MF_00250">
    <property type="entry name" value="RNApol_arch_Rpo10"/>
    <property type="match status" value="1"/>
</dbReference>
<dbReference type="InterPro" id="IPR023580">
    <property type="entry name" value="RNA_pol_su_RPB10"/>
</dbReference>
<dbReference type="InterPro" id="IPR020789">
    <property type="entry name" value="RNA_pol_suN_Zn-BS"/>
</dbReference>
<dbReference type="InterPro" id="IPR000268">
    <property type="entry name" value="RPABC5/Rpb10"/>
</dbReference>
<dbReference type="NCBIfam" id="NF003089">
    <property type="entry name" value="PRK04016.1"/>
    <property type="match status" value="1"/>
</dbReference>
<dbReference type="PANTHER" id="PTHR23431:SF3">
    <property type="entry name" value="DNA-DIRECTED RNA POLYMERASES I, II, AND III SUBUNIT RPABC5"/>
    <property type="match status" value="1"/>
</dbReference>
<dbReference type="PANTHER" id="PTHR23431">
    <property type="entry name" value="DNA-DIRECTED RNA POLYMERASES I, II, AND III SUBUNIT RPABC5 FAMILY MEMBER"/>
    <property type="match status" value="1"/>
</dbReference>
<dbReference type="Pfam" id="PF01194">
    <property type="entry name" value="RNA_pol_N"/>
    <property type="match status" value="1"/>
</dbReference>
<dbReference type="PIRSF" id="PIRSF005653">
    <property type="entry name" value="RNA_pol_N/8_sub"/>
    <property type="match status" value="1"/>
</dbReference>
<dbReference type="SUPFAM" id="SSF46924">
    <property type="entry name" value="RNA polymerase subunit RPB10"/>
    <property type="match status" value="1"/>
</dbReference>
<dbReference type="PROSITE" id="PS01112">
    <property type="entry name" value="RNA_POL_N_8KD"/>
    <property type="match status" value="1"/>
</dbReference>
<proteinExistence type="inferred from homology"/>
<accession>Q8ZYP9</accession>
<reference key="1">
    <citation type="journal article" date="2002" name="Proc. Natl. Acad. Sci. U.S.A.">
        <title>Genome sequence of the hyperthermophilic crenarchaeon Pyrobaculum aerophilum.</title>
        <authorList>
            <person name="Fitz-Gibbon S.T."/>
            <person name="Ladner H."/>
            <person name="Kim U.-J."/>
            <person name="Stetter K.O."/>
            <person name="Simon M.I."/>
            <person name="Miller J.H."/>
        </authorList>
    </citation>
    <scope>NUCLEOTIDE SEQUENCE [LARGE SCALE GENOMIC DNA]</scope>
    <source>
        <strain>ATCC 51768 / DSM 7523 / JCM 9630 / CIP 104966 / NBRC 100827 / IM2</strain>
    </source>
</reference>
<protein>
    <recommendedName>
        <fullName evidence="1">DNA-directed RNA polymerase subunit Rpo10</fullName>
        <ecNumber evidence="1">2.7.7.6</ecNumber>
    </recommendedName>
    <alternativeName>
        <fullName evidence="1">DNA-directed RNA polymerase subunit N</fullName>
    </alternativeName>
</protein>